<accession>P07833</accession>
<keyword id="KW-0963">Cytoplasm</keyword>
<keyword id="KW-0328">Glycosyltransferase</keyword>
<keyword id="KW-0460">Magnesium</keyword>
<keyword id="KW-0479">Metal-binding</keyword>
<keyword id="KW-0547">Nucleotide-binding</keyword>
<keyword id="KW-0660">Purine salvage</keyword>
<keyword id="KW-0808">Transferase</keyword>
<name>HGXR_PLAFK</name>
<feature type="chain" id="PRO_0000139598" description="Hypoxanthine-guanine-xanthine phosphoribosyltransferase">
    <location>
        <begin position="1"/>
        <end position="231"/>
    </location>
</feature>
<feature type="active site" description="Proton acceptor" evidence="1">
    <location>
        <position position="148"/>
    </location>
</feature>
<feature type="binding site" evidence="1">
    <location>
        <position position="77"/>
    </location>
    <ligand>
        <name>GMP</name>
        <dbReference type="ChEBI" id="CHEBI:58115"/>
    </ligand>
</feature>
<feature type="binding site" evidence="1">
    <location>
        <begin position="144"/>
        <end position="152"/>
    </location>
    <ligand>
        <name>GMP</name>
        <dbReference type="ChEBI" id="CHEBI:58115"/>
    </ligand>
</feature>
<feature type="binding site" evidence="1">
    <location>
        <position position="176"/>
    </location>
    <ligand>
        <name>GMP</name>
        <dbReference type="ChEBI" id="CHEBI:58115"/>
    </ligand>
</feature>
<feature type="binding site" evidence="1">
    <location>
        <position position="204"/>
    </location>
    <ligand>
        <name>GMP</name>
        <dbReference type="ChEBI" id="CHEBI:58115"/>
    </ligand>
</feature>
<feature type="binding site" evidence="1">
    <location>
        <position position="204"/>
    </location>
    <ligand>
        <name>Mg(2+)</name>
        <dbReference type="ChEBI" id="CHEBI:18420"/>
    </ligand>
</feature>
<organism>
    <name type="scientific">Plasmodium falciparum (isolate K1 / Thailand)</name>
    <dbReference type="NCBI Taxonomy" id="5839"/>
    <lineage>
        <taxon>Eukaryota</taxon>
        <taxon>Sar</taxon>
        <taxon>Alveolata</taxon>
        <taxon>Apicomplexa</taxon>
        <taxon>Aconoidasida</taxon>
        <taxon>Haemosporida</taxon>
        <taxon>Plasmodiidae</taxon>
        <taxon>Plasmodium</taxon>
        <taxon>Plasmodium (Laverania)</taxon>
    </lineage>
</organism>
<evidence type="ECO:0000250" key="1"/>
<evidence type="ECO:0000250" key="2">
    <source>
        <dbReference type="UniProtKB" id="Q26997"/>
    </source>
</evidence>
<evidence type="ECO:0000305" key="3"/>
<comment type="function">
    <text evidence="2">Catalyzes the transfer of a ribosyl phosphate group from 5-phosphoribose 1-diphosphate to the N(9) of hypoxanthine, guanine or xanthine, leading to IMP, GMP and XMP, respectively. Plays a central role in the generation of purine nucleotides through the purine salvage pathway.</text>
</comment>
<comment type="catalytic activity">
    <reaction evidence="2">
        <text>IMP + diphosphate = hypoxanthine + 5-phospho-alpha-D-ribose 1-diphosphate</text>
        <dbReference type="Rhea" id="RHEA:17973"/>
        <dbReference type="ChEBI" id="CHEBI:17368"/>
        <dbReference type="ChEBI" id="CHEBI:33019"/>
        <dbReference type="ChEBI" id="CHEBI:58017"/>
        <dbReference type="ChEBI" id="CHEBI:58053"/>
        <dbReference type="EC" id="2.4.2.8"/>
    </reaction>
    <physiologicalReaction direction="right-to-left" evidence="2">
        <dbReference type="Rhea" id="RHEA:17975"/>
    </physiologicalReaction>
</comment>
<comment type="catalytic activity">
    <reaction evidence="2">
        <text>GMP + diphosphate = guanine + 5-phospho-alpha-D-ribose 1-diphosphate</text>
        <dbReference type="Rhea" id="RHEA:25424"/>
        <dbReference type="ChEBI" id="CHEBI:16235"/>
        <dbReference type="ChEBI" id="CHEBI:33019"/>
        <dbReference type="ChEBI" id="CHEBI:58017"/>
        <dbReference type="ChEBI" id="CHEBI:58115"/>
        <dbReference type="EC" id="2.4.2.8"/>
    </reaction>
    <physiologicalReaction direction="right-to-left" evidence="2">
        <dbReference type="Rhea" id="RHEA:25426"/>
    </physiologicalReaction>
</comment>
<comment type="catalytic activity">
    <reaction evidence="2">
        <text>XMP + diphosphate = xanthine + 5-phospho-alpha-D-ribose 1-diphosphate</text>
        <dbReference type="Rhea" id="RHEA:10800"/>
        <dbReference type="ChEBI" id="CHEBI:17712"/>
        <dbReference type="ChEBI" id="CHEBI:33019"/>
        <dbReference type="ChEBI" id="CHEBI:57464"/>
        <dbReference type="ChEBI" id="CHEBI:58017"/>
        <dbReference type="EC" id="2.4.2.22"/>
    </reaction>
    <physiologicalReaction direction="right-to-left" evidence="2">
        <dbReference type="Rhea" id="RHEA:10802"/>
    </physiologicalReaction>
</comment>
<comment type="cofactor">
    <cofactor evidence="1">
        <name>Mg(2+)</name>
        <dbReference type="ChEBI" id="CHEBI:18420"/>
    </cofactor>
    <text evidence="1">Binds 2 magnesium ions per subunit. The magnesium ions are essentially bound to the substrate and have few direct interactions with the protein.</text>
</comment>
<comment type="pathway">
    <text>Purine metabolism; GMP biosynthesis via salvage pathway; GMP from guanine: step 1/1.</text>
</comment>
<comment type="pathway">
    <text>Purine metabolism; IMP biosynthesis via salvage pathway; IMP from hypoxanthine: step 1/1.</text>
</comment>
<comment type="pathway">
    <text>Purine metabolism; XMP biosynthesis via salvage pathway; XMP from xanthine: step 1/1.</text>
</comment>
<comment type="subunit">
    <text>Homotetramer.</text>
</comment>
<comment type="subcellular location">
    <subcellularLocation>
        <location>Cytoplasm</location>
    </subcellularLocation>
</comment>
<comment type="similarity">
    <text evidence="3">Belongs to the purine/pyrimidine phosphoribosyltransferase family.</text>
</comment>
<reference key="1">
    <citation type="journal article" date="1987" name="Nucleic Acids Res.">
        <title>Characterisation of cDNA clones for hypoxanthine-guanine phosphoribosyltransferase from the human malarial parasite, Plasmodium falciparum: comparisons to the mammalian gene and protein.</title>
        <authorList>
            <person name="King A."/>
            <person name="Melton D.W."/>
        </authorList>
    </citation>
    <scope>NUCLEOTIDE SEQUENCE [MRNA]</scope>
</reference>
<proteinExistence type="evidence at transcript level"/>
<gene>
    <name type="primary">LACZ</name>
</gene>
<dbReference type="EC" id="2.4.2.22" evidence="2"/>
<dbReference type="EC" id="2.4.2.8" evidence="2"/>
<dbReference type="EMBL" id="Y00519">
    <property type="protein sequence ID" value="CAA68573.1"/>
    <property type="molecule type" value="mRNA"/>
</dbReference>
<dbReference type="PIR" id="S06315">
    <property type="entry name" value="S06315"/>
</dbReference>
<dbReference type="SMR" id="P07833"/>
<dbReference type="UniPathway" id="UPA00591">
    <property type="reaction ID" value="UER00648"/>
</dbReference>
<dbReference type="UniPathway" id="UPA00602">
    <property type="reaction ID" value="UER00658"/>
</dbReference>
<dbReference type="UniPathway" id="UPA00909">
    <property type="reaction ID" value="UER00887"/>
</dbReference>
<dbReference type="GO" id="GO:0005829">
    <property type="term" value="C:cytosol"/>
    <property type="evidence" value="ECO:0007669"/>
    <property type="project" value="TreeGrafter"/>
</dbReference>
<dbReference type="GO" id="GO:0052657">
    <property type="term" value="F:guanine phosphoribosyltransferase activity"/>
    <property type="evidence" value="ECO:0007669"/>
    <property type="project" value="RHEA"/>
</dbReference>
<dbReference type="GO" id="GO:0004422">
    <property type="term" value="F:hypoxanthine phosphoribosyltransferase activity"/>
    <property type="evidence" value="ECO:0007669"/>
    <property type="project" value="InterPro"/>
</dbReference>
<dbReference type="GO" id="GO:0000287">
    <property type="term" value="F:magnesium ion binding"/>
    <property type="evidence" value="ECO:0007669"/>
    <property type="project" value="TreeGrafter"/>
</dbReference>
<dbReference type="GO" id="GO:0000166">
    <property type="term" value="F:nucleotide binding"/>
    <property type="evidence" value="ECO:0007669"/>
    <property type="project" value="UniProtKB-KW"/>
</dbReference>
<dbReference type="GO" id="GO:0000310">
    <property type="term" value="F:xanthine phosphoribosyltransferase activity"/>
    <property type="evidence" value="ECO:0007669"/>
    <property type="project" value="UniProtKB-EC"/>
</dbReference>
<dbReference type="GO" id="GO:0032263">
    <property type="term" value="P:GMP salvage"/>
    <property type="evidence" value="ECO:0007669"/>
    <property type="project" value="UniProtKB-UniPathway"/>
</dbReference>
<dbReference type="GO" id="GO:0006178">
    <property type="term" value="P:guanine salvage"/>
    <property type="evidence" value="ECO:0007669"/>
    <property type="project" value="TreeGrafter"/>
</dbReference>
<dbReference type="GO" id="GO:0046100">
    <property type="term" value="P:hypoxanthine metabolic process"/>
    <property type="evidence" value="ECO:0007669"/>
    <property type="project" value="TreeGrafter"/>
</dbReference>
<dbReference type="GO" id="GO:0032264">
    <property type="term" value="P:IMP salvage"/>
    <property type="evidence" value="ECO:0007669"/>
    <property type="project" value="UniProtKB-UniPathway"/>
</dbReference>
<dbReference type="GO" id="GO:0006166">
    <property type="term" value="P:purine ribonucleoside salvage"/>
    <property type="evidence" value="ECO:0007669"/>
    <property type="project" value="UniProtKB-KW"/>
</dbReference>
<dbReference type="GO" id="GO:0032265">
    <property type="term" value="P:XMP salvage"/>
    <property type="evidence" value="ECO:0007669"/>
    <property type="project" value="UniProtKB-UniPathway"/>
</dbReference>
<dbReference type="CDD" id="cd06223">
    <property type="entry name" value="PRTases_typeI"/>
    <property type="match status" value="1"/>
</dbReference>
<dbReference type="FunFam" id="3.40.50.2020:FF:000064">
    <property type="entry name" value="Hypoxanthine phosphoribosyltransferase"/>
    <property type="match status" value="1"/>
</dbReference>
<dbReference type="Gene3D" id="3.40.50.2020">
    <property type="match status" value="1"/>
</dbReference>
<dbReference type="InterPro" id="IPR050408">
    <property type="entry name" value="HGPRT"/>
</dbReference>
<dbReference type="InterPro" id="IPR005904">
    <property type="entry name" value="Hxn_phspho_trans"/>
</dbReference>
<dbReference type="InterPro" id="IPR000836">
    <property type="entry name" value="PRibTrfase_dom"/>
</dbReference>
<dbReference type="InterPro" id="IPR029057">
    <property type="entry name" value="PRTase-like"/>
</dbReference>
<dbReference type="NCBIfam" id="TIGR01203">
    <property type="entry name" value="HGPRTase"/>
    <property type="match status" value="1"/>
</dbReference>
<dbReference type="PANTHER" id="PTHR43340:SF1">
    <property type="entry name" value="HYPOXANTHINE PHOSPHORIBOSYLTRANSFERASE"/>
    <property type="match status" value="1"/>
</dbReference>
<dbReference type="PANTHER" id="PTHR43340">
    <property type="entry name" value="HYPOXANTHINE-GUANINE PHOSPHORIBOSYLTRANSFERASE"/>
    <property type="match status" value="1"/>
</dbReference>
<dbReference type="Pfam" id="PF00156">
    <property type="entry name" value="Pribosyltran"/>
    <property type="match status" value="1"/>
</dbReference>
<dbReference type="SUPFAM" id="SSF53271">
    <property type="entry name" value="PRTase-like"/>
    <property type="match status" value="1"/>
</dbReference>
<dbReference type="PROSITE" id="PS00103">
    <property type="entry name" value="PUR_PYR_PR_TRANSFER"/>
    <property type="match status" value="1"/>
</dbReference>
<protein>
    <recommendedName>
        <fullName>Hypoxanthine-guanine-xanthine phosphoribosyltransferase</fullName>
        <shortName>HGPRT</shortName>
        <shortName>HGXPRT</shortName>
        <shortName>HGXPRTase</shortName>
        <ecNumber evidence="2">2.4.2.22</ecNumber>
        <ecNumber evidence="2">2.4.2.8</ecNumber>
    </recommendedName>
</protein>
<sequence>MPIPNNPGAGENAFDPVFVKDDDGYDLDSFMIPAHYKKYLTKVLVPNGVIKNRIEKLAYDIKKVYNNEEFHILCLLKGSRGFFTALLKHLSRIHNYSAVEMSKPLFGEHYVRVKSYCNDQSTGTLEIVSEDLSCLKGKHVLIVEDIIDTGKTLVKFCEYLKKFEIKTVAIACLFIKRTPLWNGFKADFVGFSIPDHFVVGYSLDYNEIFRDLDHCCLVNDEGKKKYKATSL</sequence>